<reference key="1">
    <citation type="journal article" date="1998" name="Yeast">
        <title>Comparison of expression systems in the yeasts Saccharomyces cerevisiae, Hansenula polymorpha, Klyveromyces lactis, Schizosaccharomyces pombe and Yarrowia lipolytica. Cloning of two novel promoters from Yarrowia lipolytica.</title>
        <authorList>
            <person name="Mueller S."/>
            <person name="Sandal T."/>
            <person name="Kamp-Hansen P."/>
            <person name="Dalboege H."/>
        </authorList>
    </citation>
    <scope>NUCLEOTIDE SEQUENCE [MRNA]</scope>
</reference>
<reference key="2">
    <citation type="journal article" date="2004" name="Nature">
        <title>Genome evolution in yeasts.</title>
        <authorList>
            <person name="Dujon B."/>
            <person name="Sherman D."/>
            <person name="Fischer G."/>
            <person name="Durrens P."/>
            <person name="Casaregola S."/>
            <person name="Lafontaine I."/>
            <person name="de Montigny J."/>
            <person name="Marck C."/>
            <person name="Neuveglise C."/>
            <person name="Talla E."/>
            <person name="Goffard N."/>
            <person name="Frangeul L."/>
            <person name="Aigle M."/>
            <person name="Anthouard V."/>
            <person name="Babour A."/>
            <person name="Barbe V."/>
            <person name="Barnay S."/>
            <person name="Blanchin S."/>
            <person name="Beckerich J.-M."/>
            <person name="Beyne E."/>
            <person name="Bleykasten C."/>
            <person name="Boisrame A."/>
            <person name="Boyer J."/>
            <person name="Cattolico L."/>
            <person name="Confanioleri F."/>
            <person name="de Daruvar A."/>
            <person name="Despons L."/>
            <person name="Fabre E."/>
            <person name="Fairhead C."/>
            <person name="Ferry-Dumazet H."/>
            <person name="Groppi A."/>
            <person name="Hantraye F."/>
            <person name="Hennequin C."/>
            <person name="Jauniaux N."/>
            <person name="Joyet P."/>
            <person name="Kachouri R."/>
            <person name="Kerrest A."/>
            <person name="Koszul R."/>
            <person name="Lemaire M."/>
            <person name="Lesur I."/>
            <person name="Ma L."/>
            <person name="Muller H."/>
            <person name="Nicaud J.-M."/>
            <person name="Nikolski M."/>
            <person name="Oztas S."/>
            <person name="Ozier-Kalogeropoulos O."/>
            <person name="Pellenz S."/>
            <person name="Potier S."/>
            <person name="Richard G.-F."/>
            <person name="Straub M.-L."/>
            <person name="Suleau A."/>
            <person name="Swennen D."/>
            <person name="Tekaia F."/>
            <person name="Wesolowski-Louvel M."/>
            <person name="Westhof E."/>
            <person name="Wirth B."/>
            <person name="Zeniou-Meyer M."/>
            <person name="Zivanovic Y."/>
            <person name="Bolotin-Fukuhara M."/>
            <person name="Thierry A."/>
            <person name="Bouchier C."/>
            <person name="Caudron B."/>
            <person name="Scarpelli C."/>
            <person name="Gaillardin C."/>
            <person name="Weissenbach J."/>
            <person name="Wincker P."/>
            <person name="Souciet J.-L."/>
        </authorList>
    </citation>
    <scope>NUCLEOTIDE SEQUENCE [LARGE SCALE GENOMIC DNA]</scope>
    <source>
        <strain>CLIB 122 / E 150</strain>
    </source>
</reference>
<organism>
    <name type="scientific">Yarrowia lipolytica (strain CLIB 122 / E 150)</name>
    <name type="common">Yeast</name>
    <name type="synonym">Candida lipolytica</name>
    <dbReference type="NCBI Taxonomy" id="284591"/>
    <lineage>
        <taxon>Eukaryota</taxon>
        <taxon>Fungi</taxon>
        <taxon>Dikarya</taxon>
        <taxon>Ascomycota</taxon>
        <taxon>Saccharomycotina</taxon>
        <taxon>Dipodascomycetes</taxon>
        <taxon>Dipodascales</taxon>
        <taxon>Dipodascales incertae sedis</taxon>
        <taxon>Yarrowia</taxon>
    </lineage>
</organism>
<name>EF1A_YARLI</name>
<proteinExistence type="evidence at transcript level"/>
<evidence type="ECO:0000250" key="1"/>
<evidence type="ECO:0000250" key="2">
    <source>
        <dbReference type="UniProtKB" id="P02994"/>
    </source>
</evidence>
<evidence type="ECO:0000305" key="3"/>
<gene>
    <name type="primary">TEF</name>
    <name type="ordered locus">YALI0C09141g</name>
</gene>
<dbReference type="EMBL" id="AF054510">
    <property type="protein sequence ID" value="AAC08585.1"/>
    <property type="molecule type" value="mRNA"/>
</dbReference>
<dbReference type="EMBL" id="CR382129">
    <property type="protein sequence ID" value="CAG81931.1"/>
    <property type="molecule type" value="Genomic_DNA"/>
</dbReference>
<dbReference type="RefSeq" id="XP_501628.1">
    <property type="nucleotide sequence ID" value="XM_501628.1"/>
</dbReference>
<dbReference type="SMR" id="O59949"/>
<dbReference type="FunCoup" id="O59949">
    <property type="interactions" value="1769"/>
</dbReference>
<dbReference type="STRING" id="284591.O59949"/>
<dbReference type="EnsemblFungi" id="CAG81931">
    <property type="protein sequence ID" value="CAG81931"/>
    <property type="gene ID" value="YALI0_C09141g"/>
</dbReference>
<dbReference type="KEGG" id="yli:2909710"/>
<dbReference type="VEuPathDB" id="FungiDB:YALI0_C09141g"/>
<dbReference type="HOGENOM" id="CLU_007265_3_5_1"/>
<dbReference type="InParanoid" id="O59949"/>
<dbReference type="OMA" id="AIRDMGM"/>
<dbReference type="OrthoDB" id="50at4891"/>
<dbReference type="Proteomes" id="UP000001300">
    <property type="component" value="Chromosome C"/>
</dbReference>
<dbReference type="GO" id="GO:0005737">
    <property type="term" value="C:cytoplasm"/>
    <property type="evidence" value="ECO:0007669"/>
    <property type="project" value="UniProtKB-SubCell"/>
</dbReference>
<dbReference type="GO" id="GO:0005525">
    <property type="term" value="F:GTP binding"/>
    <property type="evidence" value="ECO:0007669"/>
    <property type="project" value="UniProtKB-KW"/>
</dbReference>
<dbReference type="GO" id="GO:0003924">
    <property type="term" value="F:GTPase activity"/>
    <property type="evidence" value="ECO:0000318"/>
    <property type="project" value="GO_Central"/>
</dbReference>
<dbReference type="GO" id="GO:0003746">
    <property type="term" value="F:translation elongation factor activity"/>
    <property type="evidence" value="ECO:0000318"/>
    <property type="project" value="GO_Central"/>
</dbReference>
<dbReference type="GO" id="GO:0006412">
    <property type="term" value="P:translation"/>
    <property type="evidence" value="ECO:0000318"/>
    <property type="project" value="GO_Central"/>
</dbReference>
<dbReference type="GO" id="GO:0006414">
    <property type="term" value="P:translational elongation"/>
    <property type="evidence" value="ECO:0000318"/>
    <property type="project" value="GO_Central"/>
</dbReference>
<dbReference type="CDD" id="cd01883">
    <property type="entry name" value="EF1_alpha"/>
    <property type="match status" value="1"/>
</dbReference>
<dbReference type="CDD" id="cd03693">
    <property type="entry name" value="EF1_alpha_II"/>
    <property type="match status" value="1"/>
</dbReference>
<dbReference type="CDD" id="cd03705">
    <property type="entry name" value="EF1_alpha_III"/>
    <property type="match status" value="1"/>
</dbReference>
<dbReference type="FunFam" id="2.40.30.10:FF:000003">
    <property type="entry name" value="Elongation factor 1-alpha"/>
    <property type="match status" value="1"/>
</dbReference>
<dbReference type="FunFam" id="2.40.30.10:FF:000005">
    <property type="entry name" value="Elongation factor 1-alpha"/>
    <property type="match status" value="1"/>
</dbReference>
<dbReference type="FunFam" id="3.40.50.300:FF:000211">
    <property type="entry name" value="Elongation factor 1-alpha"/>
    <property type="match status" value="1"/>
</dbReference>
<dbReference type="Gene3D" id="3.40.50.300">
    <property type="entry name" value="P-loop containing nucleotide triphosphate hydrolases"/>
    <property type="match status" value="1"/>
</dbReference>
<dbReference type="Gene3D" id="2.40.30.10">
    <property type="entry name" value="Translation factors"/>
    <property type="match status" value="2"/>
</dbReference>
<dbReference type="HAMAP" id="MF_00118_A">
    <property type="entry name" value="EF_Tu_A"/>
    <property type="match status" value="1"/>
</dbReference>
<dbReference type="InterPro" id="IPR004161">
    <property type="entry name" value="EFTu-like_2"/>
</dbReference>
<dbReference type="InterPro" id="IPR031157">
    <property type="entry name" value="G_TR_CS"/>
</dbReference>
<dbReference type="InterPro" id="IPR054696">
    <property type="entry name" value="GTP-eEF1A_C"/>
</dbReference>
<dbReference type="InterPro" id="IPR027417">
    <property type="entry name" value="P-loop_NTPase"/>
</dbReference>
<dbReference type="InterPro" id="IPR000795">
    <property type="entry name" value="T_Tr_GTP-bd_dom"/>
</dbReference>
<dbReference type="InterPro" id="IPR050100">
    <property type="entry name" value="TRAFAC_GTPase_members"/>
</dbReference>
<dbReference type="InterPro" id="IPR009000">
    <property type="entry name" value="Transl_B-barrel_sf"/>
</dbReference>
<dbReference type="InterPro" id="IPR009001">
    <property type="entry name" value="Transl_elong_EF1A/Init_IF2_C"/>
</dbReference>
<dbReference type="InterPro" id="IPR004539">
    <property type="entry name" value="Transl_elong_EF1A_euk/arc"/>
</dbReference>
<dbReference type="NCBIfam" id="TIGR00483">
    <property type="entry name" value="EF-1_alpha"/>
    <property type="match status" value="1"/>
</dbReference>
<dbReference type="NCBIfam" id="NF008969">
    <property type="entry name" value="PRK12317.1"/>
    <property type="match status" value="1"/>
</dbReference>
<dbReference type="PANTHER" id="PTHR23115">
    <property type="entry name" value="TRANSLATION FACTOR"/>
    <property type="match status" value="1"/>
</dbReference>
<dbReference type="Pfam" id="PF22594">
    <property type="entry name" value="GTP-eEF1A_C"/>
    <property type="match status" value="1"/>
</dbReference>
<dbReference type="Pfam" id="PF00009">
    <property type="entry name" value="GTP_EFTU"/>
    <property type="match status" value="1"/>
</dbReference>
<dbReference type="Pfam" id="PF03144">
    <property type="entry name" value="GTP_EFTU_D2"/>
    <property type="match status" value="1"/>
</dbReference>
<dbReference type="PRINTS" id="PR00315">
    <property type="entry name" value="ELONGATNFCT"/>
</dbReference>
<dbReference type="SUPFAM" id="SSF50465">
    <property type="entry name" value="EF-Tu/eEF-1alpha/eIF2-gamma C-terminal domain"/>
    <property type="match status" value="1"/>
</dbReference>
<dbReference type="SUPFAM" id="SSF52540">
    <property type="entry name" value="P-loop containing nucleoside triphosphate hydrolases"/>
    <property type="match status" value="1"/>
</dbReference>
<dbReference type="SUPFAM" id="SSF50447">
    <property type="entry name" value="Translation proteins"/>
    <property type="match status" value="1"/>
</dbReference>
<dbReference type="PROSITE" id="PS00301">
    <property type="entry name" value="G_TR_1"/>
    <property type="match status" value="1"/>
</dbReference>
<dbReference type="PROSITE" id="PS51722">
    <property type="entry name" value="G_TR_2"/>
    <property type="match status" value="1"/>
</dbReference>
<sequence length="460" mass="50084">MGKEKTHVNLVVIGHVDAGKSTTTGHLIYKCGGIDKRTIEKFEKEADELGKGSFKYAWVLDKLKAERERGITIDIALWKFQTPKYYVTVIDAPGHRDFIKNMITGTSQADCAILIIAGGVGEFEAGISKDGQTREHALLAFTLGVKQLIVAINKMDSVKWSQDRYNEICKETANFVKKVGYNPKSVPFVPISGWNGDNMIEASTNCDWYKGWTKETKAGEVKGKTLLEAIDAIEPPVRPSDKPLRLPLQDVYKIGGIGTVPVGRVETGVIKAGMVVTFAPANVTTEVKSVEMHHEILPDGGFPGDNVGFNVKNVSVKDIRRGNVAGDSKNDPPKGCDSFNAQVIVLNHPGQIGAGYAPVLDCHTAHIACKFDTLIEKIDRRTGKKMEDSPKFIKSGDAAIVKMVPSKPMCVEAFTEYPPLGRFAVRDMRQTVAVGVIKSVEKSDKAGGKVTKAAQKAAKK</sequence>
<protein>
    <recommendedName>
        <fullName>Elongation factor 1-alpha</fullName>
        <shortName>EF-1-alpha</shortName>
    </recommendedName>
</protein>
<comment type="function">
    <text>This protein promotes the GTP-dependent binding of aminoacyl-tRNA to the A-site of ribosomes during protein biosynthesis.</text>
</comment>
<comment type="subcellular location">
    <subcellularLocation>
        <location>Cytoplasm</location>
    </subcellularLocation>
</comment>
<comment type="similarity">
    <text evidence="3">Belongs to the TRAFAC class translation factor GTPase superfamily. Classic translation factor GTPase family. EF-Tu/EF-1A subfamily.</text>
</comment>
<feature type="initiator methionine" description="Removed" evidence="2">
    <location>
        <position position="1"/>
    </location>
</feature>
<feature type="chain" id="PRO_0000090972" description="Elongation factor 1-alpha">
    <location>
        <begin position="2"/>
        <end position="460"/>
    </location>
</feature>
<feature type="domain" description="tr-type G">
    <location>
        <begin position="5"/>
        <end position="240"/>
    </location>
</feature>
<feature type="region of interest" description="G1" evidence="1">
    <location>
        <begin position="14"/>
        <end position="21"/>
    </location>
</feature>
<feature type="region of interest" description="G2" evidence="1">
    <location>
        <begin position="70"/>
        <end position="74"/>
    </location>
</feature>
<feature type="region of interest" description="G3" evidence="1">
    <location>
        <begin position="91"/>
        <end position="94"/>
    </location>
</feature>
<feature type="region of interest" description="G4" evidence="1">
    <location>
        <begin position="153"/>
        <end position="156"/>
    </location>
</feature>
<feature type="region of interest" description="G5" evidence="1">
    <location>
        <begin position="192"/>
        <end position="194"/>
    </location>
</feature>
<feature type="binding site" evidence="1">
    <location>
        <begin position="14"/>
        <end position="21"/>
    </location>
    <ligand>
        <name>GTP</name>
        <dbReference type="ChEBI" id="CHEBI:37565"/>
    </ligand>
</feature>
<feature type="binding site" evidence="1">
    <location>
        <begin position="91"/>
        <end position="95"/>
    </location>
    <ligand>
        <name>GTP</name>
        <dbReference type="ChEBI" id="CHEBI:37565"/>
    </ligand>
</feature>
<feature type="binding site" evidence="1">
    <location>
        <begin position="153"/>
        <end position="156"/>
    </location>
    <ligand>
        <name>GTP</name>
        <dbReference type="ChEBI" id="CHEBI:37565"/>
    </ligand>
</feature>
<feature type="modified residue" description="N,N,N-trimethylglycine" evidence="2">
    <location>
        <position position="2"/>
    </location>
</feature>
<feature type="modified residue" description="N6,N6-dimethyllysine; alternate" evidence="2">
    <location>
        <position position="3"/>
    </location>
</feature>
<feature type="modified residue" description="N6-methyllysine; alternate" evidence="2">
    <location>
        <position position="3"/>
    </location>
</feature>
<feature type="modified residue" description="N6-methyllysine" evidence="2">
    <location>
        <position position="30"/>
    </location>
</feature>
<feature type="modified residue" description="N6,N6,N6-trimethyllysine" evidence="2">
    <location>
        <position position="79"/>
    </location>
</feature>
<feature type="modified residue" description="N6,N6-dimethyllysine; alternate" evidence="2">
    <location>
        <position position="317"/>
    </location>
</feature>
<feature type="modified residue" description="N6-methyllysine; alternate" evidence="2">
    <location>
        <position position="317"/>
    </location>
</feature>
<feature type="modified residue" description="N6-methyllysine" evidence="2">
    <location>
        <position position="391"/>
    </location>
</feature>
<feature type="sequence conflict" description="In Ref. 1; AAC08585." evidence="3" ref="1">
    <original>K</original>
    <variation>N</variation>
    <location>
        <position position="334"/>
    </location>
</feature>
<keyword id="KW-0963">Cytoplasm</keyword>
<keyword id="KW-0251">Elongation factor</keyword>
<keyword id="KW-0342">GTP-binding</keyword>
<keyword id="KW-0488">Methylation</keyword>
<keyword id="KW-0547">Nucleotide-binding</keyword>
<keyword id="KW-0648">Protein biosynthesis</keyword>
<keyword id="KW-1185">Reference proteome</keyword>
<accession>O59949</accession>
<accession>Q6CCI4</accession>